<evidence type="ECO:0000255" key="1">
    <source>
        <dbReference type="HAMAP-Rule" id="MF_01420"/>
    </source>
</evidence>
<dbReference type="EMBL" id="AP009256">
    <property type="protein sequence ID" value="BAF39617.1"/>
    <property type="molecule type" value="Genomic_DNA"/>
</dbReference>
<dbReference type="RefSeq" id="WP_003809200.1">
    <property type="nucleotide sequence ID" value="NZ_CAXVNC010000004.1"/>
</dbReference>
<dbReference type="SMR" id="A1A1N4"/>
<dbReference type="STRING" id="367928.BAD_0836"/>
<dbReference type="PaxDb" id="1680-BADO_0889"/>
<dbReference type="DNASU" id="4557113"/>
<dbReference type="GeneID" id="4557113"/>
<dbReference type="KEGG" id="bad:BAD_0836"/>
<dbReference type="HOGENOM" id="CLU_053282_0_0_11"/>
<dbReference type="Proteomes" id="UP000008702">
    <property type="component" value="Chromosome"/>
</dbReference>
<dbReference type="GO" id="GO:0003677">
    <property type="term" value="F:DNA binding"/>
    <property type="evidence" value="ECO:0007669"/>
    <property type="project" value="UniProtKB-UniRule"/>
</dbReference>
<dbReference type="GO" id="GO:0051301">
    <property type="term" value="P:cell division"/>
    <property type="evidence" value="ECO:0007669"/>
    <property type="project" value="UniProtKB-UniRule"/>
</dbReference>
<dbReference type="GO" id="GO:0043937">
    <property type="term" value="P:regulation of sporulation"/>
    <property type="evidence" value="ECO:0007669"/>
    <property type="project" value="InterPro"/>
</dbReference>
<dbReference type="Gene3D" id="3.10.28.10">
    <property type="entry name" value="Homing endonucleases"/>
    <property type="match status" value="1"/>
</dbReference>
<dbReference type="HAMAP" id="MF_01420">
    <property type="entry name" value="HTH_type_WhiA"/>
    <property type="match status" value="1"/>
</dbReference>
<dbReference type="InterPro" id="IPR027434">
    <property type="entry name" value="Homing_endonucl"/>
</dbReference>
<dbReference type="InterPro" id="IPR018478">
    <property type="entry name" value="Sporu_reg_WhiA_N_dom"/>
</dbReference>
<dbReference type="InterPro" id="IPR003802">
    <property type="entry name" value="Sporulation_regulator_WhiA"/>
</dbReference>
<dbReference type="InterPro" id="IPR023054">
    <property type="entry name" value="Sporulation_regulator_WhiA_C"/>
</dbReference>
<dbReference type="InterPro" id="IPR039518">
    <property type="entry name" value="WhiA_LAGLIDADG_dom"/>
</dbReference>
<dbReference type="NCBIfam" id="TIGR00647">
    <property type="entry name" value="DNA_bind_WhiA"/>
    <property type="match status" value="1"/>
</dbReference>
<dbReference type="PANTHER" id="PTHR37307">
    <property type="entry name" value="CELL DIVISION PROTEIN WHIA-RELATED"/>
    <property type="match status" value="1"/>
</dbReference>
<dbReference type="PANTHER" id="PTHR37307:SF1">
    <property type="entry name" value="CELL DIVISION PROTEIN WHIA-RELATED"/>
    <property type="match status" value="1"/>
</dbReference>
<dbReference type="Pfam" id="PF02650">
    <property type="entry name" value="HTH_WhiA"/>
    <property type="match status" value="1"/>
</dbReference>
<dbReference type="Pfam" id="PF14527">
    <property type="entry name" value="LAGLIDADG_WhiA"/>
    <property type="match status" value="1"/>
</dbReference>
<dbReference type="Pfam" id="PF10298">
    <property type="entry name" value="WhiA_N"/>
    <property type="match status" value="1"/>
</dbReference>
<dbReference type="SUPFAM" id="SSF55608">
    <property type="entry name" value="Homing endonucleases"/>
    <property type="match status" value="1"/>
</dbReference>
<accession>A1A1N4</accession>
<comment type="function">
    <text evidence="1">Involved in cell division and chromosome segregation.</text>
</comment>
<comment type="similarity">
    <text evidence="1">Belongs to the WhiA family.</text>
</comment>
<sequence>MALLDDVKSELAAIDNELPIAKKAQATAMIRFGNGLHSVDHHILVQAQLDSQDAAIWLQDTIRNLYGHEATLTPVSRQTPTGVVQRFIVRVPKGSAALVLQTGLYSRYTKNMVLGLPGDIINGKIAQIKAAWRGAFLAGGHLSDPGKASYLEIVCPNHEAALALVSTARRLGITAKPRKLRSSERVTLRDPDAIERMLILMGAPHSAREWTGKRSDGEARGKANRLANFDDANMRRSAKAAAEACDKVRQAFEILGDDVPDNLKSAGQLRLDHADASLEQLGRLADPPITKDAIAGRIRRLLQLAEKTEKARRQAA</sequence>
<feature type="chain" id="PRO_0000376446" description="Probable cell division protein WhiA">
    <location>
        <begin position="1"/>
        <end position="316"/>
    </location>
</feature>
<feature type="DNA-binding region" description="H-T-H motif" evidence="1">
    <location>
        <begin position="277"/>
        <end position="310"/>
    </location>
</feature>
<reference key="1">
    <citation type="submission" date="2006-12" db="EMBL/GenBank/DDBJ databases">
        <title>Bifidobacterium adolescentis complete genome sequence.</title>
        <authorList>
            <person name="Suzuki T."/>
            <person name="Tsuda Y."/>
            <person name="Kanou N."/>
            <person name="Inoue T."/>
            <person name="Kumazaki K."/>
            <person name="Nagano S."/>
            <person name="Hirai S."/>
            <person name="Tanaka K."/>
            <person name="Watanabe K."/>
        </authorList>
    </citation>
    <scope>NUCLEOTIDE SEQUENCE [LARGE SCALE GENOMIC DNA]</scope>
    <source>
        <strain>ATCC 15703 / DSM 20083 / NCTC 11814 / E194a</strain>
    </source>
</reference>
<gene>
    <name evidence="1" type="primary">whiA</name>
    <name type="ordered locus">BAD_0836</name>
</gene>
<name>WHIA_BIFAA</name>
<protein>
    <recommendedName>
        <fullName evidence="1">Probable cell division protein WhiA</fullName>
    </recommendedName>
</protein>
<keyword id="KW-0131">Cell cycle</keyword>
<keyword id="KW-0132">Cell division</keyword>
<keyword id="KW-0238">DNA-binding</keyword>
<keyword id="KW-1185">Reference proteome</keyword>
<organism>
    <name type="scientific">Bifidobacterium adolescentis (strain ATCC 15703 / DSM 20083 / NCTC 11814 / E194a)</name>
    <dbReference type="NCBI Taxonomy" id="367928"/>
    <lineage>
        <taxon>Bacteria</taxon>
        <taxon>Bacillati</taxon>
        <taxon>Actinomycetota</taxon>
        <taxon>Actinomycetes</taxon>
        <taxon>Bifidobacteriales</taxon>
        <taxon>Bifidobacteriaceae</taxon>
        <taxon>Bifidobacterium</taxon>
    </lineage>
</organism>
<proteinExistence type="inferred from homology"/>